<organism>
    <name type="scientific">Archaeoglobus fulgidus (strain ATCC 49558 / DSM 4304 / JCM 9628 / NBRC 100126 / VC-16)</name>
    <dbReference type="NCBI Taxonomy" id="224325"/>
    <lineage>
        <taxon>Archaea</taxon>
        <taxon>Methanobacteriati</taxon>
        <taxon>Methanobacteriota</taxon>
        <taxon>Archaeoglobi</taxon>
        <taxon>Archaeoglobales</taxon>
        <taxon>Archaeoglobaceae</taxon>
        <taxon>Archaeoglobus</taxon>
    </lineage>
</organism>
<sequence>MILPCESFNGVPSGCLIIEMNWYSVLKASTAIFFPEKYSSSTSSLSKRSPISAPMINVDGEYLKIFAGRIKLMKAVILAAGLGTRLGGVPKPLVRVGGCEIILRTMKLLSPHVSEFIIVASRYADDIDAFLKDKGFNYKIVRHDRPEKGNGYSLLVAKNHVEDRFILTMGDHVYSQQFIEKAVRGEGVIADREPRFVDIGEATKIRVEDGRVAKIGKDLREFDCVDTGFFVLDDSIFEHAEKLRDREEIPLSEIVKLARLPVTYVDGELWMDVDTKEDVRRANRALVSAAVKGSGDGFISRKINRKISTRISAAIVNKVNPNQMTLISFLVGAFSALASFFSIPLAGLLYQFSSILDGCDGEIARASLKMSKKGGYVDSILDRFVDFLFLAIIALLYPKTATVAMFAIFGSVMVSYTSEKYKAEFGESIFGKFRVLNYIPGKRDERIFLIMIFCLLSAISLQWIFWMFLFVAAISLTRVVVTLLAVLVSK</sequence>
<name>DIPPS_ARCFU</name>
<accession>O29976</accession>
<gene>
    <name type="ordered locus">AF_0263</name>
</gene>
<comment type="function">
    <text evidence="3 4 5">Involved in biosynthesis of di-myo-inositol phosphate (DIP), a widespread organic solute in microorganisms adapted to hot environments. Catalyzes the condensation of CTP and L-myo-inositol-1-phosphate into CDP-L-myo-inositol, as well as the biosynthesis of di-myo-inositol-1,3'-phosphate-1'-phosphate (DIPP) from CDP-L-myo-inositol and L-myo-inositol-1-phosphate. The cytidylyltransferase is absolutely specific for CTP and L-myo-inositol-1-P. The DIPP synthase uses only L-myoinositol-1-phosphate as an alcohol acceptor, but CDP-glycerol, as well as CDP-L-myo-inositol and CDP-D-myoinositol, are recognized as alcohol donors.</text>
</comment>
<comment type="catalytic activity">
    <reaction evidence="4">
        <text>1D-myo-inositol 3-phosphate + CTP + H(+) = CDP-1L-myo-inositol + diphosphate</text>
        <dbReference type="Rhea" id="RHEA:30647"/>
        <dbReference type="ChEBI" id="CHEBI:15378"/>
        <dbReference type="ChEBI" id="CHEBI:33019"/>
        <dbReference type="ChEBI" id="CHEBI:37563"/>
        <dbReference type="ChEBI" id="CHEBI:58401"/>
        <dbReference type="ChEBI" id="CHEBI:62573"/>
        <dbReference type="EC" id="2.7.7.74"/>
    </reaction>
</comment>
<comment type="catalytic activity">
    <reaction evidence="4">
        <text>CDP-1L-myo-inositol + 1D-myo-inositol 3-phosphate = bis(1L-myo-inositol) 3,1'-phosphate 1-phosphate + CMP + H(+)</text>
        <dbReference type="Rhea" id="RHEA:31327"/>
        <dbReference type="ChEBI" id="CHEBI:15378"/>
        <dbReference type="ChEBI" id="CHEBI:58401"/>
        <dbReference type="ChEBI" id="CHEBI:60377"/>
        <dbReference type="ChEBI" id="CHEBI:62573"/>
        <dbReference type="ChEBI" id="CHEBI:62576"/>
        <dbReference type="EC" id="2.7.8.34"/>
    </reaction>
</comment>
<comment type="cofactor">
    <cofactor evidence="1">
        <name>Mg(2+)</name>
        <dbReference type="ChEBI" id="CHEBI:18420"/>
    </cofactor>
</comment>
<comment type="biophysicochemical properties">
    <kinetics>
        <KM evidence="5">0.58 mM for CTP (at pH 7 and 90 degrees Celsius)</KM>
        <KM evidence="5">0.87 mM for Inositol-1-phosphate (at pH 7 and 90 degrees Celsius)</KM>
        <Vmax evidence="5">62.9 umol/min/mg enzyme (at pH 7 and 90 degrees Celsius)</Vmax>
    </kinetics>
    <phDependence>
        <text evidence="5">Optimum pH is between 6.5 and 7.5.</text>
    </phDependence>
    <temperatureDependence>
        <text evidence="5">Optimum temperature is between 90 and 95 degrees Celsius. The activity is undetectable at temperatures below 60 degrees Celsius.</text>
    </temperatureDependence>
</comment>
<comment type="subunit">
    <text evidence="5">Forms a mixture of monomers and dimers in solution, with prevalence of the monomeric form.</text>
</comment>
<comment type="subcellular location">
    <subcellularLocation>
        <location evidence="6">Membrane</location>
        <topology evidence="6">Multi-pass membrane protein</topology>
    </subcellularLocation>
</comment>
<comment type="similarity">
    <text evidence="6">In the N-terminal section; belongs to the MobA family.</text>
</comment>
<comment type="similarity">
    <text evidence="6">In the C-terminal section; belongs to the CDP-alcohol phosphatidyltransferase class-I family.</text>
</comment>
<reference key="1">
    <citation type="journal article" date="1997" name="Nature">
        <title>The complete genome sequence of the hyperthermophilic, sulphate-reducing archaeon Archaeoglobus fulgidus.</title>
        <authorList>
            <person name="Klenk H.-P."/>
            <person name="Clayton R.A."/>
            <person name="Tomb J.-F."/>
            <person name="White O."/>
            <person name="Nelson K.E."/>
            <person name="Ketchum K.A."/>
            <person name="Dodson R.J."/>
            <person name="Gwinn M.L."/>
            <person name="Hickey E.K."/>
            <person name="Peterson J.D."/>
            <person name="Richardson D.L."/>
            <person name="Kerlavage A.R."/>
            <person name="Graham D.E."/>
            <person name="Kyrpides N.C."/>
            <person name="Fleischmann R.D."/>
            <person name="Quackenbush J."/>
            <person name="Lee N.H."/>
            <person name="Sutton G.G."/>
            <person name="Gill S.R."/>
            <person name="Kirkness E.F."/>
            <person name="Dougherty B.A."/>
            <person name="McKenney K."/>
            <person name="Adams M.D."/>
            <person name="Loftus B.J."/>
            <person name="Peterson S.N."/>
            <person name="Reich C.I."/>
            <person name="McNeil L.K."/>
            <person name="Badger J.H."/>
            <person name="Glodek A."/>
            <person name="Zhou L."/>
            <person name="Overbeek R."/>
            <person name="Gocayne J.D."/>
            <person name="Weidman J.F."/>
            <person name="McDonald L.A."/>
            <person name="Utterback T.R."/>
            <person name="Cotton M.D."/>
            <person name="Spriggs T."/>
            <person name="Artiach P."/>
            <person name="Kaine B.P."/>
            <person name="Sykes S.M."/>
            <person name="Sadow P.W."/>
            <person name="D'Andrea K.P."/>
            <person name="Bowman C."/>
            <person name="Fujii C."/>
            <person name="Garland S.A."/>
            <person name="Mason T.M."/>
            <person name="Olsen G.J."/>
            <person name="Fraser C.M."/>
            <person name="Smith H.O."/>
            <person name="Woese C.R."/>
            <person name="Venter J.C."/>
        </authorList>
    </citation>
    <scope>NUCLEOTIDE SEQUENCE [LARGE SCALE GENOMIC DNA]</scope>
    <source>
        <strain>ATCC 49558 / DSM 4304 / JCM 9628 / NBRC 100126 / VC-16</strain>
    </source>
</reference>
<reference key="2">
    <citation type="journal article" date="2006" name="J. Bacteriol.">
        <title>Biosynthetic pathways of inositol and glycerol phosphodiesters used by the hyperthermophile Archaeoglobus fulgidus in stress adaptation.</title>
        <authorList>
            <person name="Borges N."/>
            <person name="Goncalves L.G."/>
            <person name="Rodrigues M.V."/>
            <person name="Siopa F."/>
            <person name="Ventura R."/>
            <person name="Maycock C."/>
            <person name="Lamosa P."/>
            <person name="Santos H."/>
        </authorList>
    </citation>
    <scope>FUNCTION</scope>
</reference>
<reference key="3">
    <citation type="journal article" date="2007" name="J. Bacteriol.">
        <title>Bifunctional CTP:inositol-1-phosphate cytidylyltransferase/CDP-inositol:inositol-1-phosphate transferase, the key enzyme for di-myo-inositol-phosphate synthesis in several (hyper)thermophiles.</title>
        <authorList>
            <person name="Rodrigues M.V."/>
            <person name="Borges N."/>
            <person name="Henriques M."/>
            <person name="Lamosa P."/>
            <person name="Ventura R."/>
            <person name="Fernandes C."/>
            <person name="Empadinhas N."/>
            <person name="Maycock C."/>
            <person name="da Costa M.S."/>
            <person name="Santos H."/>
        </authorList>
    </citation>
    <scope>FUNCTION</scope>
    <scope>CATALYTIC ACTIVITY</scope>
    <scope>SUBSTRATE SPECIFICITY</scope>
</reference>
<reference key="4">
    <citation type="journal article" date="2011" name="J. Bacteriol.">
        <title>Crystal structure of Archaeoglobus fulgidus CTP:inositol-1-phosphate cytidylyltransferase, a key enzyme for di-myo-inositol-phosphate synthesis in (hyper)thermophiles.</title>
        <authorList>
            <person name="Brito J.A."/>
            <person name="Borges N."/>
            <person name="Vonrhein C."/>
            <person name="Santos H."/>
            <person name="Archer M."/>
        </authorList>
    </citation>
    <scope>X-RAY CRYSTALLOGRAPHY (1.89 ANGSTROMS) OF 55-286</scope>
    <scope>FUNCTION</scope>
    <scope>BIOPHYSICOCHEMICAL PROPERTIES</scope>
    <scope>SUBUNIT</scope>
</reference>
<dbReference type="EC" id="2.7.7.74"/>
<dbReference type="EC" id="2.7.8.34"/>
<dbReference type="EMBL" id="AE000782">
    <property type="protein sequence ID" value="AAB90972.1"/>
    <property type="molecule type" value="Genomic_DNA"/>
</dbReference>
<dbReference type="PIR" id="G69282">
    <property type="entry name" value="G69282"/>
</dbReference>
<dbReference type="PDB" id="2XME">
    <property type="method" value="X-ray"/>
    <property type="resolution" value="1.89 A"/>
    <property type="chains" value="A/B/C/D/E/F/G/H/I/J/K/L=55-286"/>
</dbReference>
<dbReference type="PDB" id="2XMH">
    <property type="method" value="X-ray"/>
    <property type="resolution" value="2.40 A"/>
    <property type="chains" value="A/B/C/D/E/F=55-286"/>
</dbReference>
<dbReference type="PDB" id="4MND">
    <property type="method" value="X-ray"/>
    <property type="resolution" value="2.66 A"/>
    <property type="chains" value="A=55-490"/>
</dbReference>
<dbReference type="PDBsum" id="2XME"/>
<dbReference type="PDBsum" id="2XMH"/>
<dbReference type="PDBsum" id="4MND"/>
<dbReference type="SMR" id="O29976"/>
<dbReference type="STRING" id="224325.AF_0263"/>
<dbReference type="PaxDb" id="224325-AF_0263"/>
<dbReference type="EnsemblBacteria" id="AAB90972">
    <property type="protein sequence ID" value="AAB90972"/>
    <property type="gene ID" value="AF_0263"/>
</dbReference>
<dbReference type="KEGG" id="afu:AF_0263"/>
<dbReference type="eggNOG" id="arCOG00673">
    <property type="taxonomic scope" value="Archaea"/>
</dbReference>
<dbReference type="HOGENOM" id="CLU_643435_0_0_2"/>
<dbReference type="PhylomeDB" id="O29976"/>
<dbReference type="BioCyc" id="MetaCyc:MONOMER-16017"/>
<dbReference type="BRENDA" id="2.7.7.74">
    <property type="organism ID" value="414"/>
</dbReference>
<dbReference type="BRENDA" id="2.7.8.34">
    <property type="organism ID" value="414"/>
</dbReference>
<dbReference type="EvolutionaryTrace" id="O29976"/>
<dbReference type="Proteomes" id="UP000002199">
    <property type="component" value="Chromosome"/>
</dbReference>
<dbReference type="GO" id="GO:0016020">
    <property type="term" value="C:membrane"/>
    <property type="evidence" value="ECO:0007669"/>
    <property type="project" value="UniProtKB-SubCell"/>
</dbReference>
<dbReference type="GO" id="GO:0046872">
    <property type="term" value="F:metal ion binding"/>
    <property type="evidence" value="ECO:0007669"/>
    <property type="project" value="UniProtKB-KW"/>
</dbReference>
<dbReference type="GO" id="GO:0016779">
    <property type="term" value="F:nucleotidyltransferase activity"/>
    <property type="evidence" value="ECO:0000314"/>
    <property type="project" value="UniProtKB"/>
</dbReference>
<dbReference type="GO" id="GO:0016780">
    <property type="term" value="F:phosphotransferase activity, for other substituted phosphate groups"/>
    <property type="evidence" value="ECO:0000314"/>
    <property type="project" value="UniProtKB"/>
</dbReference>
<dbReference type="GO" id="GO:0008654">
    <property type="term" value="P:phospholipid biosynthetic process"/>
    <property type="evidence" value="ECO:0007669"/>
    <property type="project" value="InterPro"/>
</dbReference>
<dbReference type="FunFam" id="1.20.120.1760:FF:000042">
    <property type="entry name" value="Bifunctional IPC transferase and DIPP synthase"/>
    <property type="match status" value="1"/>
</dbReference>
<dbReference type="FunFam" id="3.90.550.10:FF:000282">
    <property type="entry name" value="Bifunctional IPC transferase and DIPP synthase"/>
    <property type="match status" value="1"/>
</dbReference>
<dbReference type="Gene3D" id="1.20.120.1760">
    <property type="match status" value="1"/>
</dbReference>
<dbReference type="Gene3D" id="3.90.550.10">
    <property type="entry name" value="Spore Coat Polysaccharide Biosynthesis Protein SpsA, Chain A"/>
    <property type="match status" value="1"/>
</dbReference>
<dbReference type="InterPro" id="IPR000462">
    <property type="entry name" value="CDP-OH_P_trans"/>
</dbReference>
<dbReference type="InterPro" id="IPR043130">
    <property type="entry name" value="CDP-OH_PTrfase_TM_dom"/>
</dbReference>
<dbReference type="InterPro" id="IPR048254">
    <property type="entry name" value="CDP_ALCOHOL_P_TRANSF_CS"/>
</dbReference>
<dbReference type="InterPro" id="IPR053433">
    <property type="entry name" value="IPC_transferase/DIPP_synth"/>
</dbReference>
<dbReference type="InterPro" id="IPR025877">
    <property type="entry name" value="MobA-like_NTP_Trfase"/>
</dbReference>
<dbReference type="InterPro" id="IPR029044">
    <property type="entry name" value="Nucleotide-diphossugar_trans"/>
</dbReference>
<dbReference type="NCBIfam" id="NF041135">
    <property type="entry name" value="IPPtranDIPPsyn_Thcocales"/>
    <property type="match status" value="1"/>
</dbReference>
<dbReference type="PANTHER" id="PTHR19136:SF84">
    <property type="entry name" value="BIFUNCTIONAL IPC TRANSFERASE AND DIPP SYNTHASE"/>
    <property type="match status" value="1"/>
</dbReference>
<dbReference type="PANTHER" id="PTHR19136">
    <property type="entry name" value="MOLYBDENUM COFACTOR GUANYLYLTRANSFERASE"/>
    <property type="match status" value="1"/>
</dbReference>
<dbReference type="Pfam" id="PF01066">
    <property type="entry name" value="CDP-OH_P_transf"/>
    <property type="match status" value="1"/>
</dbReference>
<dbReference type="Pfam" id="PF12804">
    <property type="entry name" value="NTP_transf_3"/>
    <property type="match status" value="1"/>
</dbReference>
<dbReference type="SUPFAM" id="SSF53448">
    <property type="entry name" value="Nucleotide-diphospho-sugar transferases"/>
    <property type="match status" value="1"/>
</dbReference>
<dbReference type="PROSITE" id="PS00379">
    <property type="entry name" value="CDP_ALCOHOL_P_TRANSF"/>
    <property type="match status" value="1"/>
</dbReference>
<feature type="chain" id="PRO_0000424330" description="Bifunctional IPC transferase and DIPP synthase">
    <location>
        <begin position="1"/>
        <end position="490"/>
    </location>
</feature>
<feature type="transmembrane region" description="Helical" evidence="2">
    <location>
        <begin position="329"/>
        <end position="349"/>
    </location>
</feature>
<feature type="transmembrane region" description="Helical" evidence="2">
    <location>
        <begin position="389"/>
        <end position="409"/>
    </location>
</feature>
<feature type="transmembrane region" description="Helical" evidence="2">
    <location>
        <begin position="447"/>
        <end position="467"/>
    </location>
</feature>
<feature type="transmembrane region" description="Helical" evidence="2">
    <location>
        <begin position="468"/>
        <end position="488"/>
    </location>
</feature>
<feature type="region of interest" description="MobA-like NTP transferase">
    <location>
        <begin position="72"/>
        <end position="290"/>
    </location>
</feature>
<feature type="region of interest" description="CDP-alcohol phosphatidyltransferases">
    <location>
        <begin position="291"/>
        <end position="490"/>
    </location>
</feature>
<feature type="binding site" evidence="1">
    <location>
        <begin position="78"/>
        <end position="80"/>
    </location>
    <ligand>
        <name>CTP</name>
        <dbReference type="ChEBI" id="CHEBI:37563"/>
    </ligand>
</feature>
<feature type="binding site" evidence="1">
    <location>
        <position position="91"/>
    </location>
    <ligand>
        <name>CTP</name>
        <dbReference type="ChEBI" id="CHEBI:37563"/>
    </ligand>
</feature>
<feature type="binding site" evidence="1">
    <location>
        <position position="144"/>
    </location>
    <ligand>
        <name>CTP</name>
        <dbReference type="ChEBI" id="CHEBI:37563"/>
    </ligand>
</feature>
<feature type="binding site" evidence="1">
    <location>
        <position position="180"/>
    </location>
    <ligand>
        <name>CTP</name>
        <dbReference type="ChEBI" id="CHEBI:37563"/>
    </ligand>
</feature>
<feature type="binding site" evidence="1">
    <location>
        <position position="180"/>
    </location>
    <ligand>
        <name>Mg(2+)</name>
        <dbReference type="ChEBI" id="CHEBI:18420"/>
    </ligand>
</feature>
<feature type="strand" evidence="7">
    <location>
        <begin position="73"/>
        <end position="79"/>
    </location>
</feature>
<feature type="helix" evidence="7">
    <location>
        <begin position="91"/>
        <end position="93"/>
    </location>
</feature>
<feature type="strand" evidence="8">
    <location>
        <begin position="95"/>
        <end position="100"/>
    </location>
</feature>
<feature type="helix" evidence="7">
    <location>
        <begin position="101"/>
        <end position="109"/>
    </location>
</feature>
<feature type="helix" evidence="7">
    <location>
        <begin position="110"/>
        <end position="112"/>
    </location>
</feature>
<feature type="strand" evidence="7">
    <location>
        <begin position="113"/>
        <end position="121"/>
    </location>
</feature>
<feature type="helix" evidence="7">
    <location>
        <begin position="124"/>
        <end position="131"/>
    </location>
</feature>
<feature type="helix" evidence="9">
    <location>
        <begin position="132"/>
        <end position="134"/>
    </location>
</feature>
<feature type="strand" evidence="7">
    <location>
        <begin position="138"/>
        <end position="142"/>
    </location>
</feature>
<feature type="helix" evidence="7">
    <location>
        <begin position="146"/>
        <end position="148"/>
    </location>
</feature>
<feature type="helix" evidence="7">
    <location>
        <begin position="150"/>
        <end position="155"/>
    </location>
</feature>
<feature type="helix" evidence="7">
    <location>
        <begin position="156"/>
        <end position="160"/>
    </location>
</feature>
<feature type="strand" evidence="7">
    <location>
        <begin position="163"/>
        <end position="169"/>
    </location>
</feature>
<feature type="strand" evidence="7">
    <location>
        <begin position="172"/>
        <end position="174"/>
    </location>
</feature>
<feature type="helix" evidence="7">
    <location>
        <begin position="176"/>
        <end position="182"/>
    </location>
</feature>
<feature type="strand" evidence="7">
    <location>
        <begin position="187"/>
        <end position="193"/>
    </location>
</feature>
<feature type="strand" evidence="7">
    <location>
        <begin position="195"/>
        <end position="197"/>
    </location>
</feature>
<feature type="turn" evidence="7">
    <location>
        <begin position="199"/>
        <end position="201"/>
    </location>
</feature>
<feature type="strand" evidence="7">
    <location>
        <begin position="204"/>
        <end position="208"/>
    </location>
</feature>
<feature type="strand" evidence="7">
    <location>
        <begin position="211"/>
        <end position="216"/>
    </location>
</feature>
<feature type="strand" evidence="7">
    <location>
        <begin position="223"/>
        <end position="232"/>
    </location>
</feature>
<feature type="helix" evidence="7">
    <location>
        <begin position="236"/>
        <end position="240"/>
    </location>
</feature>
<feature type="helix" evidence="7">
    <location>
        <begin position="241"/>
        <end position="243"/>
    </location>
</feature>
<feature type="helix" evidence="7">
    <location>
        <begin position="251"/>
        <end position="258"/>
    </location>
</feature>
<feature type="strand" evidence="7">
    <location>
        <begin position="261"/>
        <end position="264"/>
    </location>
</feature>
<feature type="strand" evidence="7">
    <location>
        <begin position="270"/>
        <end position="274"/>
    </location>
</feature>
<feature type="helix" evidence="9">
    <location>
        <begin position="276"/>
        <end position="288"/>
    </location>
</feature>
<feature type="helix" evidence="9">
    <location>
        <begin position="298"/>
        <end position="302"/>
    </location>
</feature>
<feature type="helix" evidence="9">
    <location>
        <begin position="304"/>
        <end position="315"/>
    </location>
</feature>
<feature type="turn" evidence="9">
    <location>
        <begin position="316"/>
        <end position="318"/>
    </location>
</feature>
<feature type="helix" evidence="9">
    <location>
        <begin position="321"/>
        <end position="337"/>
    </location>
</feature>
<feature type="helix" evidence="9">
    <location>
        <begin position="338"/>
        <end position="340"/>
    </location>
</feature>
<feature type="helix" evidence="9">
    <location>
        <begin position="343"/>
        <end position="356"/>
    </location>
</feature>
<feature type="helix" evidence="9">
    <location>
        <begin position="359"/>
        <end position="366"/>
    </location>
</feature>
<feature type="helix" evidence="9">
    <location>
        <begin position="372"/>
        <end position="396"/>
    </location>
</feature>
<feature type="helix" evidence="9">
    <location>
        <begin position="398"/>
        <end position="400"/>
    </location>
</feature>
<feature type="helix" evidence="9">
    <location>
        <begin position="401"/>
        <end position="425"/>
    </location>
</feature>
<feature type="helix" evidence="9">
    <location>
        <begin position="443"/>
        <end position="457"/>
    </location>
</feature>
<feature type="helix" evidence="9">
    <location>
        <begin position="462"/>
        <end position="487"/>
    </location>
</feature>
<protein>
    <recommendedName>
        <fullName>Bifunctional IPC transferase and DIPP synthase</fullName>
    </recommendedName>
    <domain>
        <recommendedName>
            <fullName>1L-myo-inositol-1-phosphate cytidylyltransferase</fullName>
            <shortName>IPCT</shortName>
            <ecNumber>2.7.7.74</ecNumber>
        </recommendedName>
    </domain>
    <domain>
        <recommendedName>
            <fullName>CDP-L-myo-inositol myo-inositolphosphotransferase</fullName>
            <shortName>DIPP synthase</shortName>
            <ecNumber>2.7.8.34</ecNumber>
        </recommendedName>
        <alternativeName>
            <fullName>Di-myo-inositol-1,3'-phosphate-1'-phosphate synthase</fullName>
        </alternativeName>
    </domain>
</protein>
<evidence type="ECO:0000250" key="1"/>
<evidence type="ECO:0000255" key="2"/>
<evidence type="ECO:0000269" key="3">
    <source>
    </source>
</evidence>
<evidence type="ECO:0000269" key="4">
    <source>
    </source>
</evidence>
<evidence type="ECO:0000269" key="5">
    <source>
    </source>
</evidence>
<evidence type="ECO:0000305" key="6"/>
<evidence type="ECO:0007829" key="7">
    <source>
        <dbReference type="PDB" id="2XME"/>
    </source>
</evidence>
<evidence type="ECO:0007829" key="8">
    <source>
        <dbReference type="PDB" id="2XMH"/>
    </source>
</evidence>
<evidence type="ECO:0007829" key="9">
    <source>
        <dbReference type="PDB" id="4MND"/>
    </source>
</evidence>
<keyword id="KW-0002">3D-structure</keyword>
<keyword id="KW-0460">Magnesium</keyword>
<keyword id="KW-0472">Membrane</keyword>
<keyword id="KW-0479">Metal-binding</keyword>
<keyword id="KW-0511">Multifunctional enzyme</keyword>
<keyword id="KW-1185">Reference proteome</keyword>
<keyword id="KW-0808">Transferase</keyword>
<keyword id="KW-0812">Transmembrane</keyword>
<keyword id="KW-1133">Transmembrane helix</keyword>
<proteinExistence type="evidence at protein level"/>